<gene>
    <name evidence="1" type="primary">rlmE</name>
    <name evidence="1" type="synonym">ftsJ</name>
    <name evidence="1" type="synonym">rrmJ</name>
    <name type="ordered locus">Ecok1_31780</name>
    <name type="ORF">APECO1_3253</name>
</gene>
<name>RLME_ECOK1</name>
<comment type="function">
    <text evidence="1">Specifically methylates the uridine in position 2552 of 23S rRNA at the 2'-O position of the ribose in the fully assembled 50S ribosomal subunit.</text>
</comment>
<comment type="catalytic activity">
    <reaction evidence="1">
        <text>uridine(2552) in 23S rRNA + S-adenosyl-L-methionine = 2'-O-methyluridine(2552) in 23S rRNA + S-adenosyl-L-homocysteine + H(+)</text>
        <dbReference type="Rhea" id="RHEA:42720"/>
        <dbReference type="Rhea" id="RHEA-COMP:10202"/>
        <dbReference type="Rhea" id="RHEA-COMP:10203"/>
        <dbReference type="ChEBI" id="CHEBI:15378"/>
        <dbReference type="ChEBI" id="CHEBI:57856"/>
        <dbReference type="ChEBI" id="CHEBI:59789"/>
        <dbReference type="ChEBI" id="CHEBI:65315"/>
        <dbReference type="ChEBI" id="CHEBI:74478"/>
        <dbReference type="EC" id="2.1.1.166"/>
    </reaction>
</comment>
<comment type="subcellular location">
    <subcellularLocation>
        <location evidence="1">Cytoplasm</location>
    </subcellularLocation>
</comment>
<comment type="similarity">
    <text evidence="1">Belongs to the class I-like SAM-binding methyltransferase superfamily. RNA methyltransferase RlmE family.</text>
</comment>
<accession>A1AG82</accession>
<dbReference type="EC" id="2.1.1.166" evidence="1"/>
<dbReference type="EMBL" id="CP000468">
    <property type="protein sequence ID" value="ABJ02672.1"/>
    <property type="molecule type" value="Genomic_DNA"/>
</dbReference>
<dbReference type="RefSeq" id="WP_000145975.1">
    <property type="nucleotide sequence ID" value="NZ_CADILS010000003.1"/>
</dbReference>
<dbReference type="SMR" id="A1AG82"/>
<dbReference type="GeneID" id="93778802"/>
<dbReference type="KEGG" id="ecv:APECO1_3253"/>
<dbReference type="HOGENOM" id="CLU_009422_4_0_6"/>
<dbReference type="Proteomes" id="UP000008216">
    <property type="component" value="Chromosome"/>
</dbReference>
<dbReference type="GO" id="GO:0005737">
    <property type="term" value="C:cytoplasm"/>
    <property type="evidence" value="ECO:0007669"/>
    <property type="project" value="UniProtKB-SubCell"/>
</dbReference>
<dbReference type="GO" id="GO:0008650">
    <property type="term" value="F:rRNA (uridine-2'-O-)-methyltransferase activity"/>
    <property type="evidence" value="ECO:0007669"/>
    <property type="project" value="UniProtKB-UniRule"/>
</dbReference>
<dbReference type="CDD" id="cd02440">
    <property type="entry name" value="AdoMet_MTases"/>
    <property type="match status" value="1"/>
</dbReference>
<dbReference type="FunFam" id="3.40.50.150:FF:000005">
    <property type="entry name" value="Ribosomal RNA large subunit methyltransferase E"/>
    <property type="match status" value="1"/>
</dbReference>
<dbReference type="Gene3D" id="3.40.50.150">
    <property type="entry name" value="Vaccinia Virus protein VP39"/>
    <property type="match status" value="1"/>
</dbReference>
<dbReference type="HAMAP" id="MF_01547">
    <property type="entry name" value="RNA_methyltr_E"/>
    <property type="match status" value="1"/>
</dbReference>
<dbReference type="InterPro" id="IPR050082">
    <property type="entry name" value="RNA_methyltr_RlmE"/>
</dbReference>
<dbReference type="InterPro" id="IPR002877">
    <property type="entry name" value="RNA_MeTrfase_FtsJ_dom"/>
</dbReference>
<dbReference type="InterPro" id="IPR015507">
    <property type="entry name" value="rRNA-MeTfrase_E"/>
</dbReference>
<dbReference type="InterPro" id="IPR004512">
    <property type="entry name" value="rRNA_MeTrfase_gammaproteobac"/>
</dbReference>
<dbReference type="InterPro" id="IPR029063">
    <property type="entry name" value="SAM-dependent_MTases_sf"/>
</dbReference>
<dbReference type="NCBIfam" id="NF008390">
    <property type="entry name" value="PRK11188.1"/>
    <property type="match status" value="1"/>
</dbReference>
<dbReference type="NCBIfam" id="TIGR00438">
    <property type="entry name" value="rrmJ"/>
    <property type="match status" value="1"/>
</dbReference>
<dbReference type="PANTHER" id="PTHR10920">
    <property type="entry name" value="RIBOSOMAL RNA METHYLTRANSFERASE"/>
    <property type="match status" value="1"/>
</dbReference>
<dbReference type="PANTHER" id="PTHR10920:SF18">
    <property type="entry name" value="RRNA METHYLTRANSFERASE 2, MITOCHONDRIAL"/>
    <property type="match status" value="1"/>
</dbReference>
<dbReference type="Pfam" id="PF01728">
    <property type="entry name" value="FtsJ"/>
    <property type="match status" value="1"/>
</dbReference>
<dbReference type="PIRSF" id="PIRSF005461">
    <property type="entry name" value="23S_rRNA_mtase"/>
    <property type="match status" value="1"/>
</dbReference>
<dbReference type="SUPFAM" id="SSF53335">
    <property type="entry name" value="S-adenosyl-L-methionine-dependent methyltransferases"/>
    <property type="match status" value="1"/>
</dbReference>
<feature type="chain" id="PRO_0000282744" description="Ribosomal RNA large subunit methyltransferase E">
    <location>
        <begin position="1"/>
        <end position="209"/>
    </location>
</feature>
<feature type="active site" description="Proton acceptor" evidence="1">
    <location>
        <position position="164"/>
    </location>
</feature>
<feature type="binding site" evidence="1">
    <location>
        <position position="63"/>
    </location>
    <ligand>
        <name>S-adenosyl-L-methionine</name>
        <dbReference type="ChEBI" id="CHEBI:59789"/>
    </ligand>
</feature>
<feature type="binding site" evidence="1">
    <location>
        <position position="65"/>
    </location>
    <ligand>
        <name>S-adenosyl-L-methionine</name>
        <dbReference type="ChEBI" id="CHEBI:59789"/>
    </ligand>
</feature>
<feature type="binding site" evidence="1">
    <location>
        <position position="83"/>
    </location>
    <ligand>
        <name>S-adenosyl-L-methionine</name>
        <dbReference type="ChEBI" id="CHEBI:59789"/>
    </ligand>
</feature>
<feature type="binding site" evidence="1">
    <location>
        <position position="99"/>
    </location>
    <ligand>
        <name>S-adenosyl-L-methionine</name>
        <dbReference type="ChEBI" id="CHEBI:59789"/>
    </ligand>
</feature>
<feature type="binding site" evidence="1">
    <location>
        <position position="124"/>
    </location>
    <ligand>
        <name>S-adenosyl-L-methionine</name>
        <dbReference type="ChEBI" id="CHEBI:59789"/>
    </ligand>
</feature>
<proteinExistence type="inferred from homology"/>
<protein>
    <recommendedName>
        <fullName evidence="1">Ribosomal RNA large subunit methyltransferase E</fullName>
        <ecNumber evidence="1">2.1.1.166</ecNumber>
    </recommendedName>
    <alternativeName>
        <fullName evidence="1">23S rRNA Um2552 methyltransferase</fullName>
    </alternativeName>
    <alternativeName>
        <fullName evidence="1">rRNA (uridine-2'-O-)-methyltransferase</fullName>
    </alternativeName>
</protein>
<evidence type="ECO:0000255" key="1">
    <source>
        <dbReference type="HAMAP-Rule" id="MF_01547"/>
    </source>
</evidence>
<sequence>MTGKKRSASSSRWLQEHFSDKYVQQAQKKGLRSRAWFKLDEIQQSDKLFKPGMTVVDLGAAPGGWSQYVVTQIGGKGRIIACDLLPMDPIVGVDFLQGDFRDELVMKALLERVGDSKVQVVMSDMAPNMSGTPAVDIPRAMYLVELALEMCRDVLAPGGSFVVKVFQGEGFDEYLREIRSLFTKVKVRKPDSSRARSREVYIVATGRKP</sequence>
<reference key="1">
    <citation type="journal article" date="2007" name="J. Bacteriol.">
        <title>The genome sequence of avian pathogenic Escherichia coli strain O1:K1:H7 shares strong similarities with human extraintestinal pathogenic E. coli genomes.</title>
        <authorList>
            <person name="Johnson T.J."/>
            <person name="Kariyawasam S."/>
            <person name="Wannemuehler Y."/>
            <person name="Mangiamele P."/>
            <person name="Johnson S.J."/>
            <person name="Doetkott C."/>
            <person name="Skyberg J.A."/>
            <person name="Lynne A.M."/>
            <person name="Johnson J.R."/>
            <person name="Nolan L.K."/>
        </authorList>
    </citation>
    <scope>NUCLEOTIDE SEQUENCE [LARGE SCALE GENOMIC DNA]</scope>
</reference>
<keyword id="KW-0963">Cytoplasm</keyword>
<keyword id="KW-0489">Methyltransferase</keyword>
<keyword id="KW-1185">Reference proteome</keyword>
<keyword id="KW-0698">rRNA processing</keyword>
<keyword id="KW-0949">S-adenosyl-L-methionine</keyword>
<keyword id="KW-0808">Transferase</keyword>
<organism>
    <name type="scientific">Escherichia coli O1:K1 / APEC</name>
    <dbReference type="NCBI Taxonomy" id="405955"/>
    <lineage>
        <taxon>Bacteria</taxon>
        <taxon>Pseudomonadati</taxon>
        <taxon>Pseudomonadota</taxon>
        <taxon>Gammaproteobacteria</taxon>
        <taxon>Enterobacterales</taxon>
        <taxon>Enterobacteriaceae</taxon>
        <taxon>Escherichia</taxon>
    </lineage>
</organism>